<feature type="chain" id="PRO_0000069578" description="G-protein coupled receptor 61">
    <location>
        <begin position="1"/>
        <end position="451"/>
    </location>
</feature>
<feature type="topological domain" description="Extracellular" evidence="2">
    <location>
        <begin position="1"/>
        <end position="44"/>
    </location>
</feature>
<feature type="transmembrane region" description="Helical; Name=1" evidence="2">
    <location>
        <begin position="45"/>
        <end position="67"/>
    </location>
</feature>
<feature type="topological domain" description="Cytoplasmic" evidence="2">
    <location>
        <begin position="68"/>
        <end position="75"/>
    </location>
</feature>
<feature type="transmembrane region" description="Helical; Name=2" evidence="2">
    <location>
        <begin position="76"/>
        <end position="98"/>
    </location>
</feature>
<feature type="topological domain" description="Extracellular" evidence="2">
    <location>
        <begin position="99"/>
        <end position="112"/>
    </location>
</feature>
<feature type="transmembrane region" description="Helical; Name=3" evidence="2">
    <location>
        <begin position="113"/>
        <end position="135"/>
    </location>
</feature>
<feature type="topological domain" description="Cytoplasmic" evidence="2">
    <location>
        <begin position="136"/>
        <end position="155"/>
    </location>
</feature>
<feature type="transmembrane region" description="Helical; Name=4" evidence="2">
    <location>
        <begin position="156"/>
        <end position="178"/>
    </location>
</feature>
<feature type="topological domain" description="Extracellular" evidence="2">
    <location>
        <begin position="179"/>
        <end position="206"/>
    </location>
</feature>
<feature type="transmembrane region" description="Helical; Name=5" evidence="2">
    <location>
        <begin position="207"/>
        <end position="229"/>
    </location>
</feature>
<feature type="topological domain" description="Cytoplasmic" evidence="2">
    <location>
        <begin position="230"/>
        <end position="287"/>
    </location>
</feature>
<feature type="transmembrane region" description="Helical; Name=6" evidence="2">
    <location>
        <begin position="288"/>
        <end position="310"/>
    </location>
</feature>
<feature type="topological domain" description="Extracellular" evidence="2">
    <location>
        <begin position="311"/>
        <end position="324"/>
    </location>
</feature>
<feature type="transmembrane region" description="Helical; Name=7" evidence="2">
    <location>
        <begin position="325"/>
        <end position="344"/>
    </location>
</feature>
<feature type="topological domain" description="Cytoplasmic" evidence="2">
    <location>
        <begin position="345"/>
        <end position="451"/>
    </location>
</feature>
<feature type="region of interest" description="Disordered" evidence="4">
    <location>
        <begin position="1"/>
        <end position="31"/>
    </location>
</feature>
<feature type="compositionally biased region" description="Low complexity" evidence="4">
    <location>
        <begin position="1"/>
        <end position="14"/>
    </location>
</feature>
<feature type="glycosylation site" description="N-linked (GlcNAc...) asparagine" evidence="7">
    <location>
        <position position="12"/>
    </location>
</feature>
<feature type="mutagenesis site" description="Does not affect subcellular location." evidence="7">
    <original>N</original>
    <variation>S</variation>
    <location>
        <position position="12"/>
    </location>
</feature>
<feature type="sequence conflict" description="In Ref. 2; AAK97826." evidence="9" ref="2">
    <original>L</original>
    <variation>P</variation>
    <location>
        <position position="91"/>
    </location>
</feature>
<feature type="sequence conflict" description="In Ref. 1; AAK12637." evidence="9" ref="1">
    <original>S</original>
    <variation>P</variation>
    <location>
        <position position="102"/>
    </location>
</feature>
<feature type="sequence conflict" description="In Ref. 2; AAK97826." evidence="9" ref="2">
    <original>V</original>
    <variation>M</variation>
    <location>
        <position position="113"/>
    </location>
</feature>
<feature type="sequence conflict" description="In Ref. 1; AAK12637." evidence="9" ref="1">
    <original>G</original>
    <variation>H</variation>
    <location>
        <position position="194"/>
    </location>
</feature>
<feature type="sequence conflict" description="In Ref. 1; AAK12637." evidence="9" ref="1">
    <original>V</original>
    <variation>L</variation>
    <location>
        <position position="226"/>
    </location>
</feature>
<feature type="sequence conflict" description="In Ref. 1; AAK12637." evidence="9" ref="1">
    <original>QH</original>
    <variation>PD</variation>
    <location>
        <begin position="241"/>
        <end position="242"/>
    </location>
</feature>
<feature type="sequence conflict" description="In Ref. 7; AAH67464." evidence="9" ref="7">
    <original>E</original>
    <variation>K</variation>
    <location>
        <position position="366"/>
    </location>
</feature>
<feature type="helix" evidence="12">
    <location>
        <begin position="46"/>
        <end position="68"/>
    </location>
</feature>
<feature type="helix" evidence="10">
    <location>
        <begin position="71"/>
        <end position="74"/>
    </location>
</feature>
<feature type="helix" evidence="12">
    <location>
        <begin position="77"/>
        <end position="98"/>
    </location>
</feature>
<feature type="strand" evidence="11">
    <location>
        <begin position="101"/>
        <end position="103"/>
    </location>
</feature>
<feature type="turn" evidence="12">
    <location>
        <begin position="113"/>
        <end position="116"/>
    </location>
</feature>
<feature type="helix" evidence="12">
    <location>
        <begin position="117"/>
        <end position="145"/>
    </location>
</feature>
<feature type="helix" evidence="12">
    <location>
        <begin position="148"/>
        <end position="150"/>
    </location>
</feature>
<feature type="strand" evidence="12">
    <location>
        <begin position="151"/>
        <end position="153"/>
    </location>
</feature>
<feature type="helix" evidence="12">
    <location>
        <begin position="156"/>
        <end position="175"/>
    </location>
</feature>
<feature type="helix" evidence="12">
    <location>
        <begin position="176"/>
        <end position="178"/>
    </location>
</feature>
<feature type="strand" evidence="11">
    <location>
        <begin position="196"/>
        <end position="198"/>
    </location>
</feature>
<feature type="helix" evidence="12">
    <location>
        <begin position="208"/>
        <end position="233"/>
    </location>
</feature>
<feature type="helix" evidence="12">
    <location>
        <begin position="285"/>
        <end position="310"/>
    </location>
</feature>
<feature type="helix" evidence="12">
    <location>
        <begin position="323"/>
        <end position="342"/>
    </location>
</feature>
<feature type="turn" evidence="12">
    <location>
        <begin position="346"/>
        <end position="348"/>
    </location>
</feature>
<dbReference type="EMBL" id="AF317652">
    <property type="protein sequence ID" value="AAK12637.1"/>
    <property type="status" value="ALT_FRAME"/>
    <property type="molecule type" value="mRNA"/>
</dbReference>
<dbReference type="EMBL" id="AF258342">
    <property type="protein sequence ID" value="AAK97826.1"/>
    <property type="molecule type" value="mRNA"/>
</dbReference>
<dbReference type="EMBL" id="AB083585">
    <property type="protein sequence ID" value="BAB89298.1"/>
    <property type="molecule type" value="Genomic_DNA"/>
</dbReference>
<dbReference type="EMBL" id="AK290027">
    <property type="protein sequence ID" value="BAF82716.1"/>
    <property type="molecule type" value="mRNA"/>
</dbReference>
<dbReference type="EMBL" id="AL355310">
    <property type="status" value="NOT_ANNOTATED_CDS"/>
    <property type="molecule type" value="Genomic_DNA"/>
</dbReference>
<dbReference type="EMBL" id="CH471122">
    <property type="protein sequence ID" value="EAW56392.1"/>
    <property type="molecule type" value="Genomic_DNA"/>
</dbReference>
<dbReference type="EMBL" id="BC067464">
    <property type="protein sequence ID" value="AAH67464.1"/>
    <property type="molecule type" value="mRNA"/>
</dbReference>
<dbReference type="CCDS" id="CCDS801.1"/>
<dbReference type="RefSeq" id="NP_001380836.1">
    <property type="nucleotide sequence ID" value="NM_001393907.1"/>
</dbReference>
<dbReference type="RefSeq" id="NP_114142.3">
    <property type="nucleotide sequence ID" value="NM_031936.4"/>
</dbReference>
<dbReference type="RefSeq" id="XP_016857927.1">
    <property type="nucleotide sequence ID" value="XM_017002438.1"/>
</dbReference>
<dbReference type="RefSeq" id="XP_047287570.1">
    <property type="nucleotide sequence ID" value="XM_047431614.1"/>
</dbReference>
<dbReference type="RefSeq" id="XP_047287571.1">
    <property type="nucleotide sequence ID" value="XM_047431615.1"/>
</dbReference>
<dbReference type="RefSeq" id="XP_047287573.1">
    <property type="nucleotide sequence ID" value="XM_047431617.1"/>
</dbReference>
<dbReference type="PDB" id="8KGK">
    <property type="method" value="EM"/>
    <property type="resolution" value="3.16 A"/>
    <property type="chains" value="A=1-365"/>
</dbReference>
<dbReference type="PDB" id="8TB0">
    <property type="method" value="EM"/>
    <property type="resolution" value="3.47 A"/>
    <property type="chains" value="R=2-451"/>
</dbReference>
<dbReference type="PDB" id="8TB7">
    <property type="method" value="EM"/>
    <property type="resolution" value="2.94 A"/>
    <property type="chains" value="R=2-233, R=284-451"/>
</dbReference>
<dbReference type="PDBsum" id="8KGK"/>
<dbReference type="PDBsum" id="8TB0"/>
<dbReference type="PDBsum" id="8TB7"/>
<dbReference type="EMDB" id="EMD-37224"/>
<dbReference type="EMDB" id="EMD-41145"/>
<dbReference type="SMR" id="Q9BZJ8"/>
<dbReference type="BioGRID" id="123786">
    <property type="interactions" value="21"/>
</dbReference>
<dbReference type="CORUM" id="Q9BZJ8"/>
<dbReference type="FunCoup" id="Q9BZJ8">
    <property type="interactions" value="334"/>
</dbReference>
<dbReference type="IntAct" id="Q9BZJ8">
    <property type="interactions" value="20"/>
</dbReference>
<dbReference type="STRING" id="9606.ENSP00000432456"/>
<dbReference type="ChEMBL" id="CHEMBL4523918"/>
<dbReference type="GuidetoPHARMACOLOGY" id="110"/>
<dbReference type="GlyCosmos" id="Q9BZJ8">
    <property type="glycosylation" value="1 site, No reported glycans"/>
</dbReference>
<dbReference type="GlyGen" id="Q9BZJ8">
    <property type="glycosylation" value="1 site"/>
</dbReference>
<dbReference type="iPTMnet" id="Q9BZJ8"/>
<dbReference type="PhosphoSitePlus" id="Q9BZJ8"/>
<dbReference type="BioMuta" id="GPR61"/>
<dbReference type="DMDM" id="76789653"/>
<dbReference type="jPOST" id="Q9BZJ8"/>
<dbReference type="PaxDb" id="9606-ENSP00000432456"/>
<dbReference type="PeptideAtlas" id="Q9BZJ8"/>
<dbReference type="ProteomicsDB" id="79862"/>
<dbReference type="Antibodypedia" id="1935">
    <property type="antibodies" value="167 antibodies from 24 providers"/>
</dbReference>
<dbReference type="DNASU" id="83873"/>
<dbReference type="Ensembl" id="ENST00000404129.6">
    <property type="protein sequence ID" value="ENSP00000385422.2"/>
    <property type="gene ID" value="ENSG00000156097.13"/>
</dbReference>
<dbReference type="Ensembl" id="ENST00000469383.2">
    <property type="protein sequence ID" value="ENSP00000433661.1"/>
    <property type="gene ID" value="ENSG00000156097.13"/>
</dbReference>
<dbReference type="Ensembl" id="ENST00000527748.5">
    <property type="protein sequence ID" value="ENSP00000432456.1"/>
    <property type="gene ID" value="ENSG00000156097.13"/>
</dbReference>
<dbReference type="Ensembl" id="ENST00000616874.2">
    <property type="protein sequence ID" value="ENSP00000484035.1"/>
    <property type="gene ID" value="ENSG00000156097.13"/>
</dbReference>
<dbReference type="Ensembl" id="ENST00000618721.5">
    <property type="protein sequence ID" value="ENSP00000484797.1"/>
    <property type="gene ID" value="ENSG00000156097.13"/>
</dbReference>
<dbReference type="GeneID" id="83873"/>
<dbReference type="KEGG" id="hsa:83873"/>
<dbReference type="MANE-Select" id="ENST00000527748.5">
    <property type="protein sequence ID" value="ENSP00000432456.1"/>
    <property type="RefSeq nucleotide sequence ID" value="NM_001393907.1"/>
    <property type="RefSeq protein sequence ID" value="NP_001380836.1"/>
</dbReference>
<dbReference type="UCSC" id="uc001dxy.2">
    <property type="organism name" value="human"/>
</dbReference>
<dbReference type="AGR" id="HGNC:13300"/>
<dbReference type="CTD" id="83873"/>
<dbReference type="DisGeNET" id="83873"/>
<dbReference type="GeneCards" id="GPR61"/>
<dbReference type="HGNC" id="HGNC:13300">
    <property type="gene designation" value="GPR61"/>
</dbReference>
<dbReference type="HPA" id="ENSG00000156097">
    <property type="expression patterns" value="Tissue enhanced (brain, pituitary gland, retina)"/>
</dbReference>
<dbReference type="MIM" id="606916">
    <property type="type" value="gene"/>
</dbReference>
<dbReference type="neXtProt" id="NX_Q9BZJ8"/>
<dbReference type="OpenTargets" id="ENSG00000156097"/>
<dbReference type="PharmGKB" id="PA28905"/>
<dbReference type="VEuPathDB" id="HostDB:ENSG00000156097"/>
<dbReference type="eggNOG" id="KOG3656">
    <property type="taxonomic scope" value="Eukaryota"/>
</dbReference>
<dbReference type="GeneTree" id="ENSGT00950000182998"/>
<dbReference type="HOGENOM" id="CLU_009579_3_1_1"/>
<dbReference type="InParanoid" id="Q9BZJ8"/>
<dbReference type="OMA" id="WMETPRR"/>
<dbReference type="OrthoDB" id="6117944at2759"/>
<dbReference type="PAN-GO" id="Q9BZJ8">
    <property type="GO annotations" value="5 GO annotations based on evolutionary models"/>
</dbReference>
<dbReference type="PhylomeDB" id="Q9BZJ8"/>
<dbReference type="TreeFam" id="TF332667"/>
<dbReference type="PathwayCommons" id="Q9BZJ8"/>
<dbReference type="SignaLink" id="Q9BZJ8"/>
<dbReference type="BioGRID-ORCS" id="83873">
    <property type="hits" value="184 hits in 1147 CRISPR screens"/>
</dbReference>
<dbReference type="GeneWiki" id="GPR61"/>
<dbReference type="GenomeRNAi" id="83873"/>
<dbReference type="Pharos" id="Q9BZJ8">
    <property type="development level" value="Tbio"/>
</dbReference>
<dbReference type="PRO" id="PR:Q9BZJ8"/>
<dbReference type="Proteomes" id="UP000005640">
    <property type="component" value="Chromosome 1"/>
</dbReference>
<dbReference type="RNAct" id="Q9BZJ8">
    <property type="molecule type" value="protein"/>
</dbReference>
<dbReference type="Bgee" id="ENSG00000156097">
    <property type="expression patterns" value="Expressed in prefrontal cortex and 92 other cell types or tissues"/>
</dbReference>
<dbReference type="ExpressionAtlas" id="Q9BZJ8">
    <property type="expression patterns" value="baseline and differential"/>
</dbReference>
<dbReference type="GO" id="GO:0005768">
    <property type="term" value="C:endosome"/>
    <property type="evidence" value="ECO:0000314"/>
    <property type="project" value="UniProtKB"/>
</dbReference>
<dbReference type="GO" id="GO:0010008">
    <property type="term" value="C:endosome membrane"/>
    <property type="evidence" value="ECO:0007669"/>
    <property type="project" value="UniProtKB-SubCell"/>
</dbReference>
<dbReference type="GO" id="GO:0005886">
    <property type="term" value="C:plasma membrane"/>
    <property type="evidence" value="ECO:0000314"/>
    <property type="project" value="UniProtKB"/>
</dbReference>
<dbReference type="GO" id="GO:0043235">
    <property type="term" value="C:receptor complex"/>
    <property type="evidence" value="ECO:0000314"/>
    <property type="project" value="MGI"/>
</dbReference>
<dbReference type="GO" id="GO:1990763">
    <property type="term" value="F:arrestin family protein binding"/>
    <property type="evidence" value="ECO:0000314"/>
    <property type="project" value="UniProtKB"/>
</dbReference>
<dbReference type="GO" id="GO:0004930">
    <property type="term" value="F:G protein-coupled receptor activity"/>
    <property type="evidence" value="ECO:0000318"/>
    <property type="project" value="GO_Central"/>
</dbReference>
<dbReference type="GO" id="GO:0007186">
    <property type="term" value="P:G protein-coupled receptor signaling pathway"/>
    <property type="evidence" value="ECO:0000318"/>
    <property type="project" value="GO_Central"/>
</dbReference>
<dbReference type="GO" id="GO:0038035">
    <property type="term" value="P:ligand-independent adenylate cyclase-activating G protein-coupled receptor signaling pathway"/>
    <property type="evidence" value="ECO:0000315"/>
    <property type="project" value="UniProtKB"/>
</dbReference>
<dbReference type="CDD" id="cd15220">
    <property type="entry name" value="7tmA_GPR61_GPR62-like"/>
    <property type="match status" value="1"/>
</dbReference>
<dbReference type="FunFam" id="1.20.1070.10:FF:000195">
    <property type="entry name" value="probable G-protein coupled receptor 61"/>
    <property type="match status" value="1"/>
</dbReference>
<dbReference type="Gene3D" id="1.20.1070.10">
    <property type="entry name" value="Rhodopsin 7-helix transmembrane proteins"/>
    <property type="match status" value="1"/>
</dbReference>
<dbReference type="InterPro" id="IPR000276">
    <property type="entry name" value="GPCR_Rhodpsn"/>
</dbReference>
<dbReference type="InterPro" id="IPR017452">
    <property type="entry name" value="GPCR_Rhodpsn_7TM"/>
</dbReference>
<dbReference type="PANTHER" id="PTHR22752">
    <property type="entry name" value="G PROTEIN-COUPLED RECEPTOR"/>
    <property type="match status" value="1"/>
</dbReference>
<dbReference type="PANTHER" id="PTHR22752:SF5">
    <property type="entry name" value="G-PROTEIN COUPLED RECEPTOR 61"/>
    <property type="match status" value="1"/>
</dbReference>
<dbReference type="Pfam" id="PF00001">
    <property type="entry name" value="7tm_1"/>
    <property type="match status" value="1"/>
</dbReference>
<dbReference type="PRINTS" id="PR00237">
    <property type="entry name" value="GPCRRHODOPSN"/>
</dbReference>
<dbReference type="SUPFAM" id="SSF81321">
    <property type="entry name" value="Family A G protein-coupled receptor-like"/>
    <property type="match status" value="1"/>
</dbReference>
<dbReference type="PROSITE" id="PS00237">
    <property type="entry name" value="G_PROTEIN_RECEP_F1_1"/>
    <property type="match status" value="1"/>
</dbReference>
<dbReference type="PROSITE" id="PS50262">
    <property type="entry name" value="G_PROTEIN_RECEP_F1_2"/>
    <property type="match status" value="1"/>
</dbReference>
<name>GPR61_HUMAN</name>
<keyword id="KW-0002">3D-structure</keyword>
<keyword id="KW-1003">Cell membrane</keyword>
<keyword id="KW-0967">Endosome</keyword>
<keyword id="KW-0297">G-protein coupled receptor</keyword>
<keyword id="KW-0325">Glycoprotein</keyword>
<keyword id="KW-0472">Membrane</keyword>
<keyword id="KW-0675">Receptor</keyword>
<keyword id="KW-1185">Reference proteome</keyword>
<keyword id="KW-0807">Transducer</keyword>
<keyword id="KW-0812">Transmembrane</keyword>
<keyword id="KW-1133">Transmembrane helix</keyword>
<reference key="1">
    <citation type="journal article" date="2001" name="Brain Res. Mol. Brain Res.">
        <title>Identification of four novel human G protein-coupled receptors expressed in the brain.</title>
        <authorList>
            <person name="Lee D.K."/>
            <person name="George S.R."/>
            <person name="Cheng R."/>
            <person name="Nguyen T."/>
            <person name="Liu Y."/>
            <person name="Brown M."/>
            <person name="Lynch K.R."/>
            <person name="O'Dowd B.F."/>
        </authorList>
    </citation>
    <scope>NUCLEOTIDE SEQUENCE [MRNA]</scope>
</reference>
<reference key="2">
    <citation type="journal article" date="2001" name="Biochim. Biophys. Acta">
        <title>Cloning of a novel biogenic amine receptor-like G protein-coupled receptor expressed in human brain.</title>
        <authorList>
            <person name="Cikos S."/>
            <person name="Gregor P."/>
            <person name="Koppel J."/>
        </authorList>
    </citation>
    <scope>NUCLEOTIDE SEQUENCE [MRNA]</scope>
    <scope>TISSUE SPECIFICITY</scope>
    <source>
        <tissue>Hypothalamus</tissue>
    </source>
</reference>
<reference key="3">
    <citation type="journal article" date="2002" name="FEBS Lett.">
        <title>Identification of G protein-coupled receptor genes from the human genome sequence.</title>
        <authorList>
            <person name="Takeda S."/>
            <person name="Kadowaki S."/>
            <person name="Haga T."/>
            <person name="Takaesu H."/>
            <person name="Mitaku S."/>
        </authorList>
    </citation>
    <scope>NUCLEOTIDE SEQUENCE [LARGE SCALE GENOMIC DNA]</scope>
</reference>
<reference key="4">
    <citation type="journal article" date="2004" name="Nat. Genet.">
        <title>Complete sequencing and characterization of 21,243 full-length human cDNAs.</title>
        <authorList>
            <person name="Ota T."/>
            <person name="Suzuki Y."/>
            <person name="Nishikawa T."/>
            <person name="Otsuki T."/>
            <person name="Sugiyama T."/>
            <person name="Irie R."/>
            <person name="Wakamatsu A."/>
            <person name="Hayashi K."/>
            <person name="Sato H."/>
            <person name="Nagai K."/>
            <person name="Kimura K."/>
            <person name="Makita H."/>
            <person name="Sekine M."/>
            <person name="Obayashi M."/>
            <person name="Nishi T."/>
            <person name="Shibahara T."/>
            <person name="Tanaka T."/>
            <person name="Ishii S."/>
            <person name="Yamamoto J."/>
            <person name="Saito K."/>
            <person name="Kawai Y."/>
            <person name="Isono Y."/>
            <person name="Nakamura Y."/>
            <person name="Nagahari K."/>
            <person name="Murakami K."/>
            <person name="Yasuda T."/>
            <person name="Iwayanagi T."/>
            <person name="Wagatsuma M."/>
            <person name="Shiratori A."/>
            <person name="Sudo H."/>
            <person name="Hosoiri T."/>
            <person name="Kaku Y."/>
            <person name="Kodaira H."/>
            <person name="Kondo H."/>
            <person name="Sugawara M."/>
            <person name="Takahashi M."/>
            <person name="Kanda K."/>
            <person name="Yokoi T."/>
            <person name="Furuya T."/>
            <person name="Kikkawa E."/>
            <person name="Omura Y."/>
            <person name="Abe K."/>
            <person name="Kamihara K."/>
            <person name="Katsuta N."/>
            <person name="Sato K."/>
            <person name="Tanikawa M."/>
            <person name="Yamazaki M."/>
            <person name="Ninomiya K."/>
            <person name="Ishibashi T."/>
            <person name="Yamashita H."/>
            <person name="Murakawa K."/>
            <person name="Fujimori K."/>
            <person name="Tanai H."/>
            <person name="Kimata M."/>
            <person name="Watanabe M."/>
            <person name="Hiraoka S."/>
            <person name="Chiba Y."/>
            <person name="Ishida S."/>
            <person name="Ono Y."/>
            <person name="Takiguchi S."/>
            <person name="Watanabe S."/>
            <person name="Yosida M."/>
            <person name="Hotuta T."/>
            <person name="Kusano J."/>
            <person name="Kanehori K."/>
            <person name="Takahashi-Fujii A."/>
            <person name="Hara H."/>
            <person name="Tanase T.-O."/>
            <person name="Nomura Y."/>
            <person name="Togiya S."/>
            <person name="Komai F."/>
            <person name="Hara R."/>
            <person name="Takeuchi K."/>
            <person name="Arita M."/>
            <person name="Imose N."/>
            <person name="Musashino K."/>
            <person name="Yuuki H."/>
            <person name="Oshima A."/>
            <person name="Sasaki N."/>
            <person name="Aotsuka S."/>
            <person name="Yoshikawa Y."/>
            <person name="Matsunawa H."/>
            <person name="Ichihara T."/>
            <person name="Shiohata N."/>
            <person name="Sano S."/>
            <person name="Moriya S."/>
            <person name="Momiyama H."/>
            <person name="Satoh N."/>
            <person name="Takami S."/>
            <person name="Terashima Y."/>
            <person name="Suzuki O."/>
            <person name="Nakagawa S."/>
            <person name="Senoh A."/>
            <person name="Mizoguchi H."/>
            <person name="Goto Y."/>
            <person name="Shimizu F."/>
            <person name="Wakebe H."/>
            <person name="Hishigaki H."/>
            <person name="Watanabe T."/>
            <person name="Sugiyama A."/>
            <person name="Takemoto M."/>
            <person name="Kawakami B."/>
            <person name="Yamazaki M."/>
            <person name="Watanabe K."/>
            <person name="Kumagai A."/>
            <person name="Itakura S."/>
            <person name="Fukuzumi Y."/>
            <person name="Fujimori Y."/>
            <person name="Komiyama M."/>
            <person name="Tashiro H."/>
            <person name="Tanigami A."/>
            <person name="Fujiwara T."/>
            <person name="Ono T."/>
            <person name="Yamada K."/>
            <person name="Fujii Y."/>
            <person name="Ozaki K."/>
            <person name="Hirao M."/>
            <person name="Ohmori Y."/>
            <person name="Kawabata A."/>
            <person name="Hikiji T."/>
            <person name="Kobatake N."/>
            <person name="Inagaki H."/>
            <person name="Ikema Y."/>
            <person name="Okamoto S."/>
            <person name="Okitani R."/>
            <person name="Kawakami T."/>
            <person name="Noguchi S."/>
            <person name="Itoh T."/>
            <person name="Shigeta K."/>
            <person name="Senba T."/>
            <person name="Matsumura K."/>
            <person name="Nakajima Y."/>
            <person name="Mizuno T."/>
            <person name="Morinaga M."/>
            <person name="Sasaki M."/>
            <person name="Togashi T."/>
            <person name="Oyama M."/>
            <person name="Hata H."/>
            <person name="Watanabe M."/>
            <person name="Komatsu T."/>
            <person name="Mizushima-Sugano J."/>
            <person name="Satoh T."/>
            <person name="Shirai Y."/>
            <person name="Takahashi Y."/>
            <person name="Nakagawa K."/>
            <person name="Okumura K."/>
            <person name="Nagase T."/>
            <person name="Nomura N."/>
            <person name="Kikuchi H."/>
            <person name="Masuho Y."/>
            <person name="Yamashita R."/>
            <person name="Nakai K."/>
            <person name="Yada T."/>
            <person name="Nakamura Y."/>
            <person name="Ohara O."/>
            <person name="Isogai T."/>
            <person name="Sugano S."/>
        </authorList>
    </citation>
    <scope>NUCLEOTIDE SEQUENCE [LARGE SCALE MRNA]</scope>
    <source>
        <tissue>Hippocampus</tissue>
    </source>
</reference>
<reference key="5">
    <citation type="journal article" date="2006" name="Nature">
        <title>The DNA sequence and biological annotation of human chromosome 1.</title>
        <authorList>
            <person name="Gregory S.G."/>
            <person name="Barlow K.F."/>
            <person name="McLay K.E."/>
            <person name="Kaul R."/>
            <person name="Swarbreck D."/>
            <person name="Dunham A."/>
            <person name="Scott C.E."/>
            <person name="Howe K.L."/>
            <person name="Woodfine K."/>
            <person name="Spencer C.C.A."/>
            <person name="Jones M.C."/>
            <person name="Gillson C."/>
            <person name="Searle S."/>
            <person name="Zhou Y."/>
            <person name="Kokocinski F."/>
            <person name="McDonald L."/>
            <person name="Evans R."/>
            <person name="Phillips K."/>
            <person name="Atkinson A."/>
            <person name="Cooper R."/>
            <person name="Jones C."/>
            <person name="Hall R.E."/>
            <person name="Andrews T.D."/>
            <person name="Lloyd C."/>
            <person name="Ainscough R."/>
            <person name="Almeida J.P."/>
            <person name="Ambrose K.D."/>
            <person name="Anderson F."/>
            <person name="Andrew R.W."/>
            <person name="Ashwell R.I.S."/>
            <person name="Aubin K."/>
            <person name="Babbage A.K."/>
            <person name="Bagguley C.L."/>
            <person name="Bailey J."/>
            <person name="Beasley H."/>
            <person name="Bethel G."/>
            <person name="Bird C.P."/>
            <person name="Bray-Allen S."/>
            <person name="Brown J.Y."/>
            <person name="Brown A.J."/>
            <person name="Buckley D."/>
            <person name="Burton J."/>
            <person name="Bye J."/>
            <person name="Carder C."/>
            <person name="Chapman J.C."/>
            <person name="Clark S.Y."/>
            <person name="Clarke G."/>
            <person name="Clee C."/>
            <person name="Cobley V."/>
            <person name="Collier R.E."/>
            <person name="Corby N."/>
            <person name="Coville G.J."/>
            <person name="Davies J."/>
            <person name="Deadman R."/>
            <person name="Dunn M."/>
            <person name="Earthrowl M."/>
            <person name="Ellington A.G."/>
            <person name="Errington H."/>
            <person name="Frankish A."/>
            <person name="Frankland J."/>
            <person name="French L."/>
            <person name="Garner P."/>
            <person name="Garnett J."/>
            <person name="Gay L."/>
            <person name="Ghori M.R.J."/>
            <person name="Gibson R."/>
            <person name="Gilby L.M."/>
            <person name="Gillett W."/>
            <person name="Glithero R.J."/>
            <person name="Grafham D.V."/>
            <person name="Griffiths C."/>
            <person name="Griffiths-Jones S."/>
            <person name="Grocock R."/>
            <person name="Hammond S."/>
            <person name="Harrison E.S.I."/>
            <person name="Hart E."/>
            <person name="Haugen E."/>
            <person name="Heath P.D."/>
            <person name="Holmes S."/>
            <person name="Holt K."/>
            <person name="Howden P.J."/>
            <person name="Hunt A.R."/>
            <person name="Hunt S.E."/>
            <person name="Hunter G."/>
            <person name="Isherwood J."/>
            <person name="James R."/>
            <person name="Johnson C."/>
            <person name="Johnson D."/>
            <person name="Joy A."/>
            <person name="Kay M."/>
            <person name="Kershaw J.K."/>
            <person name="Kibukawa M."/>
            <person name="Kimberley A.M."/>
            <person name="King A."/>
            <person name="Knights A.J."/>
            <person name="Lad H."/>
            <person name="Laird G."/>
            <person name="Lawlor S."/>
            <person name="Leongamornlert D.A."/>
            <person name="Lloyd D.M."/>
            <person name="Loveland J."/>
            <person name="Lovell J."/>
            <person name="Lush M.J."/>
            <person name="Lyne R."/>
            <person name="Martin S."/>
            <person name="Mashreghi-Mohammadi M."/>
            <person name="Matthews L."/>
            <person name="Matthews N.S.W."/>
            <person name="McLaren S."/>
            <person name="Milne S."/>
            <person name="Mistry S."/>
            <person name="Moore M.J.F."/>
            <person name="Nickerson T."/>
            <person name="O'Dell C.N."/>
            <person name="Oliver K."/>
            <person name="Palmeiri A."/>
            <person name="Palmer S.A."/>
            <person name="Parker A."/>
            <person name="Patel D."/>
            <person name="Pearce A.V."/>
            <person name="Peck A.I."/>
            <person name="Pelan S."/>
            <person name="Phelps K."/>
            <person name="Phillimore B.J."/>
            <person name="Plumb R."/>
            <person name="Rajan J."/>
            <person name="Raymond C."/>
            <person name="Rouse G."/>
            <person name="Saenphimmachak C."/>
            <person name="Sehra H.K."/>
            <person name="Sheridan E."/>
            <person name="Shownkeen R."/>
            <person name="Sims S."/>
            <person name="Skuce C.D."/>
            <person name="Smith M."/>
            <person name="Steward C."/>
            <person name="Subramanian S."/>
            <person name="Sycamore N."/>
            <person name="Tracey A."/>
            <person name="Tromans A."/>
            <person name="Van Helmond Z."/>
            <person name="Wall M."/>
            <person name="Wallis J.M."/>
            <person name="White S."/>
            <person name="Whitehead S.L."/>
            <person name="Wilkinson J.E."/>
            <person name="Willey D.L."/>
            <person name="Williams H."/>
            <person name="Wilming L."/>
            <person name="Wray P.W."/>
            <person name="Wu Z."/>
            <person name="Coulson A."/>
            <person name="Vaudin M."/>
            <person name="Sulston J.E."/>
            <person name="Durbin R.M."/>
            <person name="Hubbard T."/>
            <person name="Wooster R."/>
            <person name="Dunham I."/>
            <person name="Carter N.P."/>
            <person name="McVean G."/>
            <person name="Ross M.T."/>
            <person name="Harrow J."/>
            <person name="Olson M.V."/>
            <person name="Beck S."/>
            <person name="Rogers J."/>
            <person name="Bentley D.R."/>
        </authorList>
    </citation>
    <scope>NUCLEOTIDE SEQUENCE [LARGE SCALE GENOMIC DNA]</scope>
</reference>
<reference key="6">
    <citation type="submission" date="2005-07" db="EMBL/GenBank/DDBJ databases">
        <authorList>
            <person name="Mural R.J."/>
            <person name="Istrail S."/>
            <person name="Sutton G.G."/>
            <person name="Florea L."/>
            <person name="Halpern A.L."/>
            <person name="Mobarry C.M."/>
            <person name="Lippert R."/>
            <person name="Walenz B."/>
            <person name="Shatkay H."/>
            <person name="Dew I."/>
            <person name="Miller J.R."/>
            <person name="Flanigan M.J."/>
            <person name="Edwards N.J."/>
            <person name="Bolanos R."/>
            <person name="Fasulo D."/>
            <person name="Halldorsson B.V."/>
            <person name="Hannenhalli S."/>
            <person name="Turner R."/>
            <person name="Yooseph S."/>
            <person name="Lu F."/>
            <person name="Nusskern D.R."/>
            <person name="Shue B.C."/>
            <person name="Zheng X.H."/>
            <person name="Zhong F."/>
            <person name="Delcher A.L."/>
            <person name="Huson D.H."/>
            <person name="Kravitz S.A."/>
            <person name="Mouchard L."/>
            <person name="Reinert K."/>
            <person name="Remington K.A."/>
            <person name="Clark A.G."/>
            <person name="Waterman M.S."/>
            <person name="Eichler E.E."/>
            <person name="Adams M.D."/>
            <person name="Hunkapiller M.W."/>
            <person name="Myers E.W."/>
            <person name="Venter J.C."/>
        </authorList>
    </citation>
    <scope>NUCLEOTIDE SEQUENCE [LARGE SCALE GENOMIC DNA]</scope>
</reference>
<reference key="7">
    <citation type="journal article" date="2004" name="Genome Res.">
        <title>The status, quality, and expansion of the NIH full-length cDNA project: the Mammalian Gene Collection (MGC).</title>
        <authorList>
            <consortium name="The MGC Project Team"/>
        </authorList>
    </citation>
    <scope>NUCLEOTIDE SEQUENCE [LARGE SCALE MRNA]</scope>
</reference>
<reference key="8">
    <citation type="journal article" date="2017" name="FEBS Open Bio">
        <title>N-glycosylation and expression in human tissues of the orphan GPR61 receptor.</title>
        <authorList>
            <person name="Kozielewicz P."/>
            <person name="Alomar H."/>
            <person name="Yusof S."/>
            <person name="Grafton G."/>
            <person name="Cooper A.J."/>
            <person name="Curnow S.J."/>
            <person name="Ironside J.W."/>
            <person name="Pall H."/>
            <person name="Barnes N.M."/>
        </authorList>
    </citation>
    <scope>GLYCOSYLATION AT ASN-12</scope>
    <scope>MUTAGENESIS OF ASN-12</scope>
    <scope>TISSUE SPECIFICITY</scope>
    <scope>SUBCELLULAR LOCATION</scope>
</reference>
<reference key="9">
    <citation type="journal article" date="2017" name="Sci. Rep.">
        <title>Orphan GPR61, GPR62 and GPR135 receptors and the melatonin MT2 receptor reciprocally modulate their signaling functions.</title>
        <authorList>
            <person name="Oishi A."/>
            <person name="Karamitri A."/>
            <person name="Gerbier R."/>
            <person name="Lahuna O."/>
            <person name="Ahmad R."/>
            <person name="Jockers R."/>
        </authorList>
    </citation>
    <scope>SUBCELLULAR LOCATION</scope>
    <scope>SUBUNIT</scope>
    <scope>INTERACTION WITH MTNR1B</scope>
    <scope>FUNCTION</scope>
    <scope>INTERACTION WITH ARRB1 AND ARRB2</scope>
</reference>
<protein>
    <recommendedName>
        <fullName evidence="9">G-protein coupled receptor 61</fullName>
    </recommendedName>
    <alternativeName>
        <fullName evidence="8">Biogenic amine receptor-like G-protein coupled receptor</fullName>
    </alternativeName>
</protein>
<evidence type="ECO:0000250" key="1">
    <source>
        <dbReference type="UniProtKB" id="Q8C010"/>
    </source>
</evidence>
<evidence type="ECO:0000255" key="2"/>
<evidence type="ECO:0000255" key="3">
    <source>
        <dbReference type="PROSITE-ProRule" id="PRU00521"/>
    </source>
</evidence>
<evidence type="ECO:0000256" key="4">
    <source>
        <dbReference type="SAM" id="MobiDB-lite"/>
    </source>
</evidence>
<evidence type="ECO:0000269" key="5">
    <source>
    </source>
</evidence>
<evidence type="ECO:0000269" key="6">
    <source>
    </source>
</evidence>
<evidence type="ECO:0000269" key="7">
    <source>
    </source>
</evidence>
<evidence type="ECO:0000303" key="8">
    <source>
    </source>
</evidence>
<evidence type="ECO:0000305" key="9"/>
<evidence type="ECO:0007829" key="10">
    <source>
        <dbReference type="PDB" id="8KGK"/>
    </source>
</evidence>
<evidence type="ECO:0007829" key="11">
    <source>
        <dbReference type="PDB" id="8TB0"/>
    </source>
</evidence>
<evidence type="ECO:0007829" key="12">
    <source>
        <dbReference type="PDB" id="8TB7"/>
    </source>
</evidence>
<organism>
    <name type="scientific">Homo sapiens</name>
    <name type="common">Human</name>
    <dbReference type="NCBI Taxonomy" id="9606"/>
    <lineage>
        <taxon>Eukaryota</taxon>
        <taxon>Metazoa</taxon>
        <taxon>Chordata</taxon>
        <taxon>Craniata</taxon>
        <taxon>Vertebrata</taxon>
        <taxon>Euteleostomi</taxon>
        <taxon>Mammalia</taxon>
        <taxon>Eutheria</taxon>
        <taxon>Euarchontoglires</taxon>
        <taxon>Primates</taxon>
        <taxon>Haplorrhini</taxon>
        <taxon>Catarrhini</taxon>
        <taxon>Hominidae</taxon>
        <taxon>Homo</taxon>
    </lineage>
</organism>
<gene>
    <name type="primary">GPR61</name>
    <name evidence="8" type="synonym">BALGR</name>
    <name type="synonym">GPCR3</name>
</gene>
<sequence>MESSPIPQSSGNSSTLGRVPQTPGPSTASGVPEVGLRDVASESVALFFMLLLDLTAVAGNAAVMAVIAKTPALRKFVFVFHLCLVDLLAALTLMPLAMLSSSALFDHALFGEVACRLYLFLSVCFVSLAILSVSAINVERYYYVVHPMRYEVRMTLGLVASVLVGVWVKALAMASVPVLGRVSWEEGAPSVPPGCSLQWSHSAYCQLFVVVFAVLYFLLPLLLILVVYCSMFRVARVAAMQHGPLPTWMETPRQRSESLSSRSTMVTSSGAPQTTPHRTFGGGKAAVVLLAVGGQFLLCWLPYFSFHLYVALSAQPISTGQVESVVTWIGYFCFTSNPFFYGCLNRQIRGELSKQFVCFFKPAPEEELRLPSREGSIEENFLQFLQGTGCPSESWVSRPLPSPKQEPPAVDFRIPGQIAEETSEFLEQQLTSDIIMSDSYLRPAASPRLES</sequence>
<comment type="function">
    <text evidence="1 6">Orphan G-protein coupled receptor. Constitutively activates the G(s)-alpha/cAMP signaling pathway (PubMed:28827538). Shows a reciprocal regulatory interaction with the melatonin receptor MTNR1B most likely through receptor heteromerization (PubMed:28827538). May be involved in the regulation of food intake and body weight (By similarity).</text>
</comment>
<comment type="subunit">
    <text evidence="6">Forms heterodimer with MTNR1B (PubMed:28827538). Interacts with ARRB1 and ARRB2 in a spontaneous and agonist-independent manner; leading to the internalization of GPR61 in the endosomal compartment (PubMed:28827538).</text>
</comment>
<comment type="interaction">
    <interactant intactId="EBI-12808020">
        <id>Q9BZJ8</id>
    </interactant>
    <interactant intactId="EBI-2808844">
        <id>Q8N6S5</id>
        <label>ARL6IP6</label>
    </interactant>
    <organismsDiffer>false</organismsDiffer>
    <experiments>3</experiments>
</comment>
<comment type="interaction">
    <interactant intactId="EBI-12808020">
        <id>Q9BZJ8</id>
    </interactant>
    <interactant intactId="EBI-3904417">
        <id>Q99437</id>
        <label>ATP6V0B</label>
    </interactant>
    <organismsDiffer>false</organismsDiffer>
    <experiments>3</experiments>
</comment>
<comment type="interaction">
    <interactant intactId="EBI-12808020">
        <id>Q9BZJ8</id>
    </interactant>
    <interactant intactId="EBI-12003442">
        <id>Q8WVX3-2</id>
        <label>C4orf3</label>
    </interactant>
    <organismsDiffer>false</organismsDiffer>
    <experiments>3</experiments>
</comment>
<comment type="interaction">
    <interactant intactId="EBI-12808020">
        <id>Q9BZJ8</id>
    </interactant>
    <interactant intactId="EBI-4319704">
        <id>Q9NY35</id>
        <label>CLDND1</label>
    </interactant>
    <organismsDiffer>false</organismsDiffer>
    <experiments>3</experiments>
</comment>
<comment type="interaction">
    <interactant intactId="EBI-12808020">
        <id>Q9BZJ8</id>
    </interactant>
    <interactant intactId="EBI-12019274">
        <id>Q4LDR2</id>
        <label>CTXN3</label>
    </interactant>
    <organismsDiffer>false</organismsDiffer>
    <experiments>3</experiments>
</comment>
<comment type="interaction">
    <interactant intactId="EBI-12808020">
        <id>Q9BZJ8</id>
    </interactant>
    <interactant intactId="EBI-3907816">
        <id>P54852</id>
        <label>EMP3</label>
    </interactant>
    <organismsDiffer>false</organismsDiffer>
    <experiments>3</experiments>
</comment>
<comment type="interaction">
    <interactant intactId="EBI-12808020">
        <id>Q9BZJ8</id>
    </interactant>
    <interactant intactId="EBI-17458373">
        <id>P48165</id>
        <label>GJA8</label>
    </interactant>
    <organismsDiffer>false</organismsDiffer>
    <experiments>3</experiments>
</comment>
<comment type="interaction">
    <interactant intactId="EBI-12808020">
        <id>Q9BZJ8</id>
    </interactant>
    <interactant intactId="EBI-13345609">
        <id>O95452</id>
        <label>GJB6</label>
    </interactant>
    <organismsDiffer>false</organismsDiffer>
    <experiments>3</experiments>
</comment>
<comment type="interaction">
    <interactant intactId="EBI-12808020">
        <id>Q9BZJ8</id>
    </interactant>
    <interactant intactId="EBI-9018187">
        <id>P26715</id>
        <label>KLRC1</label>
    </interactant>
    <organismsDiffer>false</organismsDiffer>
    <experiments>3</experiments>
</comment>
<comment type="interaction">
    <interactant intactId="EBI-12808020">
        <id>Q9BZJ8</id>
    </interactant>
    <interactant intactId="EBI-12188331">
        <id>P60201-2</id>
        <label>PLP1</label>
    </interactant>
    <organismsDiffer>false</organismsDiffer>
    <experiments>3</experiments>
</comment>
<comment type="interaction">
    <interactant intactId="EBI-12808020">
        <id>Q9BZJ8</id>
    </interactant>
    <interactant intactId="EBI-2845982">
        <id>Q01453</id>
        <label>PMP22</label>
    </interactant>
    <organismsDiffer>false</organismsDiffer>
    <experiments>3</experiments>
</comment>
<comment type="interaction">
    <interactant intactId="EBI-12808020">
        <id>Q9BZJ8</id>
    </interactant>
    <interactant intactId="EBI-17247926">
        <id>Q9NY72</id>
        <label>SCN3B</label>
    </interactant>
    <organismsDiffer>false</organismsDiffer>
    <experiments>3</experiments>
</comment>
<comment type="interaction">
    <interactant intactId="EBI-12808020">
        <id>Q9BZJ8</id>
    </interactant>
    <interactant intactId="EBI-12854384">
        <id>Q9Y666-2</id>
        <label>SLC12A7</label>
    </interactant>
    <organismsDiffer>false</organismsDiffer>
    <experiments>3</experiments>
</comment>
<comment type="interaction">
    <interactant intactId="EBI-12808020">
        <id>Q9BZJ8</id>
    </interactant>
    <interactant intactId="EBI-12808018">
        <id>Q9UKG4</id>
        <label>SLC13A4</label>
    </interactant>
    <organismsDiffer>false</organismsDiffer>
    <experiments>3</experiments>
</comment>
<comment type="interaction">
    <interactant intactId="EBI-12808020">
        <id>Q9BZJ8</id>
    </interactant>
    <interactant intactId="EBI-12266234">
        <id>Q8IVJ1</id>
        <label>SLC41A1</label>
    </interactant>
    <organismsDiffer>false</organismsDiffer>
    <experiments>3</experiments>
</comment>
<comment type="interaction">
    <interactant intactId="EBI-12808020">
        <id>Q9BZJ8</id>
    </interactant>
    <interactant intactId="EBI-12200293">
        <id>P0DN84</id>
        <label>STRIT1</label>
    </interactant>
    <organismsDiffer>false</organismsDiffer>
    <experiments>3</experiments>
</comment>
<comment type="interaction">
    <interactant intactId="EBI-12808020">
        <id>Q9BZJ8</id>
    </interactant>
    <interactant intactId="EBI-348587">
        <id>Q9BVK8</id>
        <label>TMEM147</label>
    </interactant>
    <organismsDiffer>false</organismsDiffer>
    <experiments>3</experiments>
</comment>
<comment type="interaction">
    <interactant intactId="EBI-12808020">
        <id>Q9BZJ8</id>
    </interactant>
    <interactant intactId="EBI-10173151">
        <id>A2RU14</id>
        <label>TMEM218</label>
    </interactant>
    <organismsDiffer>false</organismsDiffer>
    <experiments>3</experiments>
</comment>
<comment type="interaction">
    <interactant intactId="EBI-12808020">
        <id>Q9BZJ8</id>
    </interactant>
    <interactant intactId="EBI-2852148">
        <id>Q9H2L4</id>
        <label>TMEM60</label>
    </interactant>
    <organismsDiffer>false</organismsDiffer>
    <experiments>3</experiments>
</comment>
<comment type="interaction">
    <interactant intactId="EBI-12808020">
        <id>Q9BZJ8</id>
    </interactant>
    <interactant intactId="EBI-11988865">
        <id>A5PKU2</id>
        <label>TUSC5</label>
    </interactant>
    <organismsDiffer>false</organismsDiffer>
    <experiments>3</experiments>
</comment>
<comment type="subcellular location">
    <subcellularLocation>
        <location evidence="6 7">Cell membrane</location>
        <topology evidence="2">Multi-pass membrane protein</topology>
    </subcellularLocation>
    <subcellularLocation>
        <location evidence="6">Endosome membrane</location>
        <topology evidence="2">Multi-pass membrane protein</topology>
    </subcellularLocation>
    <text evidence="6">Colocalizes with ARRB2/beta-arrestin-2 in the endosome (PubMed:28827538).</text>
</comment>
<comment type="tissue specificity">
    <text evidence="5 7">Expressed in brain; detected in frontal and temporal lobes, occipital pole, amygdala and hippocampus (PubMed:11690637, PubMed:29226084). Also expressed in testis (PubMed:11690637, PubMed:29226084) and T cells, B cells, and monocyte (PubMed:29226084). Low expression in many other tissues (PubMed:11690637, PubMed:29226084). Widely expressed in the hippocampus (at protein level).</text>
</comment>
<comment type="similarity">
    <text evidence="3">Belongs to the G-protein coupled receptor 1 family.</text>
</comment>
<comment type="sequence caution" evidence="9">
    <conflict type="frameshift">
        <sequence resource="EMBL-CDS" id="AAK12637"/>
    </conflict>
</comment>
<proteinExistence type="evidence at protein level"/>
<accession>Q9BZJ8</accession>
<accession>A8K1W2</accession>
<accession>Q6NWS0</accession>
<accession>Q8TDV4</accession>
<accession>Q96PR4</accession>